<feature type="chain" id="PRO_0000346813" description="Zinc finger CCCH domain-containing protein 17">
    <location>
        <begin position="1"/>
        <end position="435"/>
    </location>
</feature>
<feature type="repeat" description="WD 1">
    <location>
        <begin position="148"/>
        <end position="189"/>
    </location>
</feature>
<feature type="repeat" description="WD 2">
    <location>
        <begin position="191"/>
        <end position="225"/>
    </location>
</feature>
<feature type="repeat" description="WD 3">
    <location>
        <begin position="227"/>
        <end position="264"/>
    </location>
</feature>
<feature type="repeat" description="WD 4">
    <location>
        <begin position="271"/>
        <end position="308"/>
    </location>
</feature>
<feature type="repeat" description="WD 5">
    <location>
        <begin position="311"/>
        <end position="348"/>
    </location>
</feature>
<feature type="repeat" description="WD 6">
    <location>
        <begin position="355"/>
        <end position="395"/>
    </location>
</feature>
<feature type="repeat" description="WD 7">
    <location>
        <begin position="397"/>
        <end position="435"/>
    </location>
</feature>
<feature type="zinc finger region" description="C3H1-type 1" evidence="1">
    <location>
        <begin position="28"/>
        <end position="54"/>
    </location>
</feature>
<feature type="zinc finger region" description="C3H1-type 2" evidence="1">
    <location>
        <begin position="108"/>
        <end position="135"/>
    </location>
</feature>
<feature type="region of interest" description="Disordered" evidence="2">
    <location>
        <begin position="1"/>
        <end position="30"/>
    </location>
</feature>
<feature type="region of interest" description="Disordered" evidence="2">
    <location>
        <begin position="58"/>
        <end position="107"/>
    </location>
</feature>
<feature type="compositionally biased region" description="Gly residues" evidence="2">
    <location>
        <begin position="77"/>
        <end position="103"/>
    </location>
</feature>
<feature type="splice variant" id="VSP_035017" description="In isoform 2." evidence="3">
    <original>WAAT</original>
    <variation>SLCP</variation>
    <location>
        <begin position="338"/>
        <end position="341"/>
    </location>
</feature>
<feature type="splice variant" id="VSP_035018" description="In isoform 2." evidence="3">
    <location>
        <begin position="342"/>
        <end position="435"/>
    </location>
</feature>
<protein>
    <recommendedName>
        <fullName>Zinc finger CCCH domain-containing protein 17</fullName>
        <shortName>OsC3H17</shortName>
    </recommendedName>
</protein>
<sequence length="435" mass="46640">MDIETDGRFGNKRVHHRLGPANGAASSSTSGKVCIHWRAGRCNRFPCPYLHSELPEATAKRPSQSGGGGNVWRNPHSGGGGGRGAGGAGGPNKWGRGPGGADGGPRHKVPDRPCRYFLAGDCSYGEKCRYPHSYSMSDSITMLTPLQGHEKVVTGIALPAGSDKLYSGSKDGTVRMWDCQTGQCAGVINMGREIGCMISEGPWLFVGIPDAVKVWNMQTQAEMNLTGPTGQVYALAVGNELLFAATQDGRILAWRFSAATNGFEPAASLVGHQLAVVSLVVGAMRLYSASMDKTIRVWDLATLQCIQTLSDHTGVVMSVLCWDQFLLSCSLDQTIKVWAATESGSLEVTYTHKEEHGALALSGMPDAQSKPVLLCSLNDNTVRLYDLPSFSDRGRIFSKQEIRAIQVGPSGLFFTGDGTGELKVWQWVIDGSQTK</sequence>
<gene>
    <name type="ordered locus">Os02g0677700</name>
    <name type="ordered locus">LOC_Os02g45480</name>
</gene>
<dbReference type="EMBL" id="AP008208">
    <property type="protein sequence ID" value="BAF09643.1"/>
    <property type="molecule type" value="Genomic_DNA"/>
</dbReference>
<dbReference type="EMBL" id="AP014958">
    <property type="protein sequence ID" value="BAS80279.1"/>
    <property type="molecule type" value="Genomic_DNA"/>
</dbReference>
<dbReference type="EMBL" id="AK102324">
    <property type="status" value="NOT_ANNOTATED_CDS"/>
    <property type="molecule type" value="mRNA"/>
</dbReference>
<dbReference type="RefSeq" id="XP_015627227.1">
    <property type="nucleotide sequence ID" value="XM_015771741.1"/>
</dbReference>
<dbReference type="SMR" id="Q0DYP5"/>
<dbReference type="FunCoup" id="Q0DYP5">
    <property type="interactions" value="216"/>
</dbReference>
<dbReference type="STRING" id="39947.Q0DYP5"/>
<dbReference type="PaxDb" id="39947-Q0DYP5"/>
<dbReference type="eggNOG" id="KOG0274">
    <property type="taxonomic scope" value="Eukaryota"/>
</dbReference>
<dbReference type="InParanoid" id="Q0DYP5"/>
<dbReference type="OMA" id="MNGGNTR"/>
<dbReference type="OrthoDB" id="59941at2759"/>
<dbReference type="Proteomes" id="UP000000763">
    <property type="component" value="Chromosome 2"/>
</dbReference>
<dbReference type="Proteomes" id="UP000059680">
    <property type="component" value="Chromosome 2"/>
</dbReference>
<dbReference type="GO" id="GO:0003677">
    <property type="term" value="F:DNA binding"/>
    <property type="evidence" value="ECO:0007669"/>
    <property type="project" value="UniProtKB-KW"/>
</dbReference>
<dbReference type="GO" id="GO:0008270">
    <property type="term" value="F:zinc ion binding"/>
    <property type="evidence" value="ECO:0007669"/>
    <property type="project" value="UniProtKB-KW"/>
</dbReference>
<dbReference type="FunFam" id="2.130.10.10:FF:000869">
    <property type="entry name" value="Zinc finger CCCH domain-containing protein 48"/>
    <property type="match status" value="1"/>
</dbReference>
<dbReference type="FunFam" id="2.130.10.10:FF:001235">
    <property type="entry name" value="Zinc finger CCCH domain-containing protein 48"/>
    <property type="match status" value="1"/>
</dbReference>
<dbReference type="Gene3D" id="2.30.30.1190">
    <property type="match status" value="1"/>
</dbReference>
<dbReference type="Gene3D" id="2.130.10.10">
    <property type="entry name" value="YVTN repeat-like/Quinoprotein amine dehydrogenase"/>
    <property type="match status" value="2"/>
</dbReference>
<dbReference type="InterPro" id="IPR020472">
    <property type="entry name" value="G-protein_beta_WD-40_rep"/>
</dbReference>
<dbReference type="InterPro" id="IPR015943">
    <property type="entry name" value="WD40/YVTN_repeat-like_dom_sf"/>
</dbReference>
<dbReference type="InterPro" id="IPR019775">
    <property type="entry name" value="WD40_repeat_CS"/>
</dbReference>
<dbReference type="InterPro" id="IPR036322">
    <property type="entry name" value="WD40_repeat_dom_sf"/>
</dbReference>
<dbReference type="InterPro" id="IPR001680">
    <property type="entry name" value="WD40_rpt"/>
</dbReference>
<dbReference type="InterPro" id="IPR044715">
    <property type="entry name" value="WDR86-like"/>
</dbReference>
<dbReference type="InterPro" id="IPR041367">
    <property type="entry name" value="Znf-CCCH_4"/>
</dbReference>
<dbReference type="InterPro" id="IPR000571">
    <property type="entry name" value="Znf_CCCH"/>
</dbReference>
<dbReference type="InterPro" id="IPR036855">
    <property type="entry name" value="Znf_CCCH_sf"/>
</dbReference>
<dbReference type="PANTHER" id="PTHR44489">
    <property type="match status" value="1"/>
</dbReference>
<dbReference type="PANTHER" id="PTHR44489:SF1">
    <property type="entry name" value="ZINC FINGER CCCH DOMAIN-CONTAINING PROTEIN 63"/>
    <property type="match status" value="1"/>
</dbReference>
<dbReference type="Pfam" id="PF00400">
    <property type="entry name" value="WD40"/>
    <property type="match status" value="3"/>
</dbReference>
<dbReference type="Pfam" id="PF18044">
    <property type="entry name" value="zf-CCCH_4"/>
    <property type="match status" value="1"/>
</dbReference>
<dbReference type="PRINTS" id="PR00320">
    <property type="entry name" value="GPROTEINBRPT"/>
</dbReference>
<dbReference type="SMART" id="SM00320">
    <property type="entry name" value="WD40"/>
    <property type="match status" value="6"/>
</dbReference>
<dbReference type="SMART" id="SM00356">
    <property type="entry name" value="ZnF_C3H1"/>
    <property type="match status" value="2"/>
</dbReference>
<dbReference type="SUPFAM" id="SSF90229">
    <property type="entry name" value="CCCH zinc finger"/>
    <property type="match status" value="1"/>
</dbReference>
<dbReference type="SUPFAM" id="SSF50978">
    <property type="entry name" value="WD40 repeat-like"/>
    <property type="match status" value="1"/>
</dbReference>
<dbReference type="PROSITE" id="PS00678">
    <property type="entry name" value="WD_REPEATS_1"/>
    <property type="match status" value="2"/>
</dbReference>
<dbReference type="PROSITE" id="PS50082">
    <property type="entry name" value="WD_REPEATS_2"/>
    <property type="match status" value="2"/>
</dbReference>
<dbReference type="PROSITE" id="PS50294">
    <property type="entry name" value="WD_REPEATS_REGION"/>
    <property type="match status" value="1"/>
</dbReference>
<dbReference type="PROSITE" id="PS50103">
    <property type="entry name" value="ZF_C3H1"/>
    <property type="match status" value="2"/>
</dbReference>
<evidence type="ECO:0000255" key="1">
    <source>
        <dbReference type="PROSITE-ProRule" id="PRU00723"/>
    </source>
</evidence>
<evidence type="ECO:0000256" key="2">
    <source>
        <dbReference type="SAM" id="MobiDB-lite"/>
    </source>
</evidence>
<evidence type="ECO:0000303" key="3">
    <source>
    </source>
</evidence>
<proteinExistence type="evidence at transcript level"/>
<keyword id="KW-0025">Alternative splicing</keyword>
<keyword id="KW-0238">DNA-binding</keyword>
<keyword id="KW-0479">Metal-binding</keyword>
<keyword id="KW-1185">Reference proteome</keyword>
<keyword id="KW-0677">Repeat</keyword>
<keyword id="KW-0853">WD repeat</keyword>
<keyword id="KW-0862">Zinc</keyword>
<keyword id="KW-0863">Zinc-finger</keyword>
<reference key="1">
    <citation type="journal article" date="2005" name="Nature">
        <title>The map-based sequence of the rice genome.</title>
        <authorList>
            <consortium name="International rice genome sequencing project (IRGSP)"/>
        </authorList>
    </citation>
    <scope>NUCLEOTIDE SEQUENCE [LARGE SCALE GENOMIC DNA]</scope>
    <source>
        <strain>cv. Nipponbare</strain>
    </source>
</reference>
<reference key="2">
    <citation type="journal article" date="2008" name="Nucleic Acids Res.">
        <title>The rice annotation project database (RAP-DB): 2008 update.</title>
        <authorList>
            <consortium name="The rice annotation project (RAP)"/>
        </authorList>
    </citation>
    <scope>GENOME REANNOTATION</scope>
    <source>
        <strain>cv. Nipponbare</strain>
    </source>
</reference>
<reference key="3">
    <citation type="journal article" date="2013" name="Rice">
        <title>Improvement of the Oryza sativa Nipponbare reference genome using next generation sequence and optical map data.</title>
        <authorList>
            <person name="Kawahara Y."/>
            <person name="de la Bastide M."/>
            <person name="Hamilton J.P."/>
            <person name="Kanamori H."/>
            <person name="McCombie W.R."/>
            <person name="Ouyang S."/>
            <person name="Schwartz D.C."/>
            <person name="Tanaka T."/>
            <person name="Wu J."/>
            <person name="Zhou S."/>
            <person name="Childs K.L."/>
            <person name="Davidson R.M."/>
            <person name="Lin H."/>
            <person name="Quesada-Ocampo L."/>
            <person name="Vaillancourt B."/>
            <person name="Sakai H."/>
            <person name="Lee S.S."/>
            <person name="Kim J."/>
            <person name="Numa H."/>
            <person name="Itoh T."/>
            <person name="Buell C.R."/>
            <person name="Matsumoto T."/>
        </authorList>
    </citation>
    <scope>GENOME REANNOTATION</scope>
    <source>
        <strain>cv. Nipponbare</strain>
    </source>
</reference>
<reference key="4">
    <citation type="journal article" date="2003" name="Science">
        <title>Collection, mapping, and annotation of over 28,000 cDNA clones from japonica rice.</title>
        <authorList>
            <consortium name="The rice full-length cDNA consortium"/>
        </authorList>
    </citation>
    <scope>NUCLEOTIDE SEQUENCE [LARGE SCALE MRNA] (ISOFORM 2)</scope>
    <source>
        <strain>cv. Nipponbare</strain>
    </source>
</reference>
<reference key="5">
    <citation type="journal article" date="2008" name="BMC Genomics">
        <title>Genome-wide analysis of CCCH zinc finger family in Arabidopsis and rice.</title>
        <authorList>
            <person name="Wang D."/>
            <person name="Guo Y."/>
            <person name="Wu C."/>
            <person name="Yang G."/>
            <person name="Li Y."/>
            <person name="Zheng C."/>
        </authorList>
    </citation>
    <scope>NOMENCLATURE</scope>
</reference>
<organism>
    <name type="scientific">Oryza sativa subsp. japonica</name>
    <name type="common">Rice</name>
    <dbReference type="NCBI Taxonomy" id="39947"/>
    <lineage>
        <taxon>Eukaryota</taxon>
        <taxon>Viridiplantae</taxon>
        <taxon>Streptophyta</taxon>
        <taxon>Embryophyta</taxon>
        <taxon>Tracheophyta</taxon>
        <taxon>Spermatophyta</taxon>
        <taxon>Magnoliopsida</taxon>
        <taxon>Liliopsida</taxon>
        <taxon>Poales</taxon>
        <taxon>Poaceae</taxon>
        <taxon>BOP clade</taxon>
        <taxon>Oryzoideae</taxon>
        <taxon>Oryzeae</taxon>
        <taxon>Oryzinae</taxon>
        <taxon>Oryza</taxon>
        <taxon>Oryza sativa</taxon>
    </lineage>
</organism>
<comment type="alternative products">
    <event type="alternative splicing"/>
    <isoform>
        <id>Q0DYP5-1</id>
        <name>1</name>
        <sequence type="displayed"/>
    </isoform>
    <isoform>
        <id>Q0DYP5-2</id>
        <name>2</name>
        <sequence type="described" ref="VSP_035017 VSP_035018"/>
    </isoform>
</comment>
<accession>Q0DYP5</accession>
<name>C3H17_ORYSJ</name>